<accession>B5FN87</accession>
<protein>
    <recommendedName>
        <fullName evidence="1">Probable ECA polymerase</fullName>
    </recommendedName>
</protein>
<comment type="function">
    <text evidence="1">Probably involved in the polymerization of enterobacterial common antigen (ECA) trisaccharide repeat units.</text>
</comment>
<comment type="pathway">
    <text evidence="1">Bacterial outer membrane biogenesis; enterobacterial common antigen biosynthesis.</text>
</comment>
<comment type="subunit">
    <text evidence="1">Probably part of a complex composed of WzxE, WzyE and WzzE.</text>
</comment>
<comment type="subcellular location">
    <subcellularLocation>
        <location evidence="1">Cell inner membrane</location>
        <topology evidence="1">Multi-pass membrane protein</topology>
    </subcellularLocation>
</comment>
<comment type="similarity">
    <text evidence="1">Belongs to the WzyE family.</text>
</comment>
<sequence length="452" mass="51633">MSLMQFSGLLVVWLLSTLFIATLTWFEFRRVRFNFNVFFSLLFLLTFFFGFPLTSVLVFRFDVGVAPPEILLQALLSAACFYGVYYVTYKTRLRKRVVDVPRKPLFTMNRVETHLTWVILMGIALVSVAIFFMHNGFLLFRLHSYSQIFSSEVSGVALKRFFYFFIPAMLVVYFLRQDSKAWLFFLVSTVAFGLLTYMIVGGTRANIIIAFAIFLFIGIIRGWISLWMLAAAGVLGIVGMFWLALKRYGLNVSGDEAFYTFLYLTRDTFSPWENLALLLQNYHNIDFQGLAPIVRDFYVFIPTWLWPGRPSIVLNSANYFTWEVLNNHSGLAISPTLIGSLVVMGGALFIPLGAIVVGLIIKWFDWLYELGNREPNRYKAAILHSFCFGAIFNMIVLAREGLDSFVSRVVFFLVVFGASLLVAKLLFWLFDSAGLIHKRTTSLPQAQVEGKL</sequence>
<gene>
    <name evidence="1" type="primary">wzyE</name>
    <name type="ordered locus">SeD_A4316</name>
</gene>
<evidence type="ECO:0000255" key="1">
    <source>
        <dbReference type="HAMAP-Rule" id="MF_01003"/>
    </source>
</evidence>
<organism>
    <name type="scientific">Salmonella dublin (strain CT_02021853)</name>
    <dbReference type="NCBI Taxonomy" id="439851"/>
    <lineage>
        <taxon>Bacteria</taxon>
        <taxon>Pseudomonadati</taxon>
        <taxon>Pseudomonadota</taxon>
        <taxon>Gammaproteobacteria</taxon>
        <taxon>Enterobacterales</taxon>
        <taxon>Enterobacteriaceae</taxon>
        <taxon>Salmonella</taxon>
    </lineage>
</organism>
<dbReference type="EMBL" id="CP001144">
    <property type="protein sequence ID" value="ACH73921.1"/>
    <property type="molecule type" value="Genomic_DNA"/>
</dbReference>
<dbReference type="RefSeq" id="WP_000055605.1">
    <property type="nucleotide sequence ID" value="NC_011205.1"/>
</dbReference>
<dbReference type="KEGG" id="sed:SeD_A4316"/>
<dbReference type="HOGENOM" id="CLU_049711_0_0_6"/>
<dbReference type="UniPathway" id="UPA00566"/>
<dbReference type="Proteomes" id="UP000008322">
    <property type="component" value="Chromosome"/>
</dbReference>
<dbReference type="GO" id="GO:0005886">
    <property type="term" value="C:plasma membrane"/>
    <property type="evidence" value="ECO:0007669"/>
    <property type="project" value="UniProtKB-SubCell"/>
</dbReference>
<dbReference type="GO" id="GO:0009246">
    <property type="term" value="P:enterobacterial common antigen biosynthetic process"/>
    <property type="evidence" value="ECO:0007669"/>
    <property type="project" value="UniProtKB-UniRule"/>
</dbReference>
<dbReference type="HAMAP" id="MF_01003">
    <property type="entry name" value="WzyE"/>
    <property type="match status" value="1"/>
</dbReference>
<dbReference type="InterPro" id="IPR010691">
    <property type="entry name" value="WzyE"/>
</dbReference>
<dbReference type="NCBIfam" id="NF002820">
    <property type="entry name" value="PRK02975.1"/>
    <property type="match status" value="1"/>
</dbReference>
<dbReference type="Pfam" id="PF06899">
    <property type="entry name" value="WzyE"/>
    <property type="match status" value="1"/>
</dbReference>
<feature type="chain" id="PRO_1000200213" description="Probable ECA polymerase">
    <location>
        <begin position="1"/>
        <end position="452"/>
    </location>
</feature>
<feature type="transmembrane region" description="Helical" evidence="1">
    <location>
        <begin position="6"/>
        <end position="26"/>
    </location>
</feature>
<feature type="transmembrane region" description="Helical" evidence="1">
    <location>
        <begin position="37"/>
        <end position="57"/>
    </location>
</feature>
<feature type="transmembrane region" description="Helical" evidence="1">
    <location>
        <begin position="63"/>
        <end position="83"/>
    </location>
</feature>
<feature type="transmembrane region" description="Helical" evidence="1">
    <location>
        <begin position="118"/>
        <end position="138"/>
    </location>
</feature>
<feature type="transmembrane region" description="Helical" evidence="1">
    <location>
        <begin position="155"/>
        <end position="175"/>
    </location>
</feature>
<feature type="transmembrane region" description="Helical" evidence="1">
    <location>
        <begin position="181"/>
        <end position="201"/>
    </location>
</feature>
<feature type="transmembrane region" description="Helical" evidence="1">
    <location>
        <begin position="207"/>
        <end position="227"/>
    </location>
</feature>
<feature type="transmembrane region" description="Helical" evidence="1">
    <location>
        <begin position="228"/>
        <end position="248"/>
    </location>
</feature>
<feature type="transmembrane region" description="Helical" evidence="1">
    <location>
        <begin position="341"/>
        <end position="361"/>
    </location>
</feature>
<feature type="transmembrane region" description="Helical" evidence="1">
    <location>
        <begin position="378"/>
        <end position="398"/>
    </location>
</feature>
<feature type="transmembrane region" description="Helical" evidence="1">
    <location>
        <begin position="410"/>
        <end position="430"/>
    </location>
</feature>
<proteinExistence type="inferred from homology"/>
<name>WZYE_SALDC</name>
<reference key="1">
    <citation type="journal article" date="2011" name="J. Bacteriol.">
        <title>Comparative genomics of 28 Salmonella enterica isolates: evidence for CRISPR-mediated adaptive sublineage evolution.</title>
        <authorList>
            <person name="Fricke W.F."/>
            <person name="Mammel M.K."/>
            <person name="McDermott P.F."/>
            <person name="Tartera C."/>
            <person name="White D.G."/>
            <person name="Leclerc J.E."/>
            <person name="Ravel J."/>
            <person name="Cebula T.A."/>
        </authorList>
    </citation>
    <scope>NUCLEOTIDE SEQUENCE [LARGE SCALE GENOMIC DNA]</scope>
    <source>
        <strain>CT_02021853</strain>
    </source>
</reference>
<keyword id="KW-0997">Cell inner membrane</keyword>
<keyword id="KW-1003">Cell membrane</keyword>
<keyword id="KW-0472">Membrane</keyword>
<keyword id="KW-0812">Transmembrane</keyword>
<keyword id="KW-1133">Transmembrane helix</keyword>